<gene>
    <name evidence="1" type="primary">ndk</name>
    <name type="ordered locus">PC1_3018</name>
</gene>
<dbReference type="EC" id="2.7.4.6" evidence="1"/>
<dbReference type="EMBL" id="CP001657">
    <property type="protein sequence ID" value="ACT14041.1"/>
    <property type="molecule type" value="Genomic_DNA"/>
</dbReference>
<dbReference type="RefSeq" id="WP_015841195.1">
    <property type="nucleotide sequence ID" value="NC_012917.1"/>
</dbReference>
<dbReference type="SMR" id="C6DBH8"/>
<dbReference type="STRING" id="561230.PC1_3018"/>
<dbReference type="GeneID" id="67793146"/>
<dbReference type="KEGG" id="pct:PC1_3018"/>
<dbReference type="eggNOG" id="COG0105">
    <property type="taxonomic scope" value="Bacteria"/>
</dbReference>
<dbReference type="HOGENOM" id="CLU_060216_8_1_6"/>
<dbReference type="OrthoDB" id="9801161at2"/>
<dbReference type="Proteomes" id="UP000002736">
    <property type="component" value="Chromosome"/>
</dbReference>
<dbReference type="GO" id="GO:0005737">
    <property type="term" value="C:cytoplasm"/>
    <property type="evidence" value="ECO:0007669"/>
    <property type="project" value="UniProtKB-SubCell"/>
</dbReference>
<dbReference type="GO" id="GO:0005524">
    <property type="term" value="F:ATP binding"/>
    <property type="evidence" value="ECO:0007669"/>
    <property type="project" value="UniProtKB-UniRule"/>
</dbReference>
<dbReference type="GO" id="GO:0046872">
    <property type="term" value="F:metal ion binding"/>
    <property type="evidence" value="ECO:0007669"/>
    <property type="project" value="UniProtKB-KW"/>
</dbReference>
<dbReference type="GO" id="GO:0004550">
    <property type="term" value="F:nucleoside diphosphate kinase activity"/>
    <property type="evidence" value="ECO:0007669"/>
    <property type="project" value="UniProtKB-UniRule"/>
</dbReference>
<dbReference type="GO" id="GO:0006241">
    <property type="term" value="P:CTP biosynthetic process"/>
    <property type="evidence" value="ECO:0007669"/>
    <property type="project" value="UniProtKB-UniRule"/>
</dbReference>
<dbReference type="GO" id="GO:0006183">
    <property type="term" value="P:GTP biosynthetic process"/>
    <property type="evidence" value="ECO:0007669"/>
    <property type="project" value="UniProtKB-UniRule"/>
</dbReference>
<dbReference type="GO" id="GO:0006228">
    <property type="term" value="P:UTP biosynthetic process"/>
    <property type="evidence" value="ECO:0007669"/>
    <property type="project" value="UniProtKB-UniRule"/>
</dbReference>
<dbReference type="CDD" id="cd04413">
    <property type="entry name" value="NDPk_I"/>
    <property type="match status" value="1"/>
</dbReference>
<dbReference type="FunFam" id="3.30.70.141:FF:000001">
    <property type="entry name" value="Nucleoside diphosphate kinase"/>
    <property type="match status" value="1"/>
</dbReference>
<dbReference type="Gene3D" id="3.30.70.141">
    <property type="entry name" value="Nucleoside diphosphate kinase-like domain"/>
    <property type="match status" value="1"/>
</dbReference>
<dbReference type="HAMAP" id="MF_00451">
    <property type="entry name" value="NDP_kinase"/>
    <property type="match status" value="1"/>
</dbReference>
<dbReference type="InterPro" id="IPR034907">
    <property type="entry name" value="NDK-like_dom"/>
</dbReference>
<dbReference type="InterPro" id="IPR036850">
    <property type="entry name" value="NDK-like_dom_sf"/>
</dbReference>
<dbReference type="InterPro" id="IPR001564">
    <property type="entry name" value="Nucleoside_diP_kinase"/>
</dbReference>
<dbReference type="InterPro" id="IPR023005">
    <property type="entry name" value="Nucleoside_diP_kinase_AS"/>
</dbReference>
<dbReference type="NCBIfam" id="NF001908">
    <property type="entry name" value="PRK00668.1"/>
    <property type="match status" value="1"/>
</dbReference>
<dbReference type="PANTHER" id="PTHR46161">
    <property type="entry name" value="NUCLEOSIDE DIPHOSPHATE KINASE"/>
    <property type="match status" value="1"/>
</dbReference>
<dbReference type="PANTHER" id="PTHR46161:SF3">
    <property type="entry name" value="NUCLEOSIDE DIPHOSPHATE KINASE DDB_G0292928-RELATED"/>
    <property type="match status" value="1"/>
</dbReference>
<dbReference type="Pfam" id="PF00334">
    <property type="entry name" value="NDK"/>
    <property type="match status" value="1"/>
</dbReference>
<dbReference type="PRINTS" id="PR01243">
    <property type="entry name" value="NUCDPKINASE"/>
</dbReference>
<dbReference type="SMART" id="SM00562">
    <property type="entry name" value="NDK"/>
    <property type="match status" value="1"/>
</dbReference>
<dbReference type="SUPFAM" id="SSF54919">
    <property type="entry name" value="Nucleoside diphosphate kinase, NDK"/>
    <property type="match status" value="1"/>
</dbReference>
<dbReference type="PROSITE" id="PS00469">
    <property type="entry name" value="NDPK"/>
    <property type="match status" value="1"/>
</dbReference>
<dbReference type="PROSITE" id="PS51374">
    <property type="entry name" value="NDPK_LIKE"/>
    <property type="match status" value="1"/>
</dbReference>
<feature type="chain" id="PRO_1000206217" description="Nucleoside diphosphate kinase">
    <location>
        <begin position="1"/>
        <end position="142"/>
    </location>
</feature>
<feature type="active site" description="Pros-phosphohistidine intermediate" evidence="1">
    <location>
        <position position="117"/>
    </location>
</feature>
<feature type="binding site" evidence="1">
    <location>
        <position position="11"/>
    </location>
    <ligand>
        <name>ATP</name>
        <dbReference type="ChEBI" id="CHEBI:30616"/>
    </ligand>
</feature>
<feature type="binding site" evidence="1">
    <location>
        <position position="59"/>
    </location>
    <ligand>
        <name>ATP</name>
        <dbReference type="ChEBI" id="CHEBI:30616"/>
    </ligand>
</feature>
<feature type="binding site" evidence="1">
    <location>
        <position position="87"/>
    </location>
    <ligand>
        <name>ATP</name>
        <dbReference type="ChEBI" id="CHEBI:30616"/>
    </ligand>
</feature>
<feature type="binding site" evidence="1">
    <location>
        <position position="93"/>
    </location>
    <ligand>
        <name>ATP</name>
        <dbReference type="ChEBI" id="CHEBI:30616"/>
    </ligand>
</feature>
<feature type="binding site" evidence="1">
    <location>
        <position position="104"/>
    </location>
    <ligand>
        <name>ATP</name>
        <dbReference type="ChEBI" id="CHEBI:30616"/>
    </ligand>
</feature>
<feature type="binding site" evidence="1">
    <location>
        <position position="114"/>
    </location>
    <ligand>
        <name>ATP</name>
        <dbReference type="ChEBI" id="CHEBI:30616"/>
    </ligand>
</feature>
<accession>C6DBH8</accession>
<comment type="function">
    <text evidence="1">Major role in the synthesis of nucleoside triphosphates other than ATP. The ATP gamma phosphate is transferred to the NDP beta phosphate via a ping-pong mechanism, using a phosphorylated active-site intermediate.</text>
</comment>
<comment type="catalytic activity">
    <reaction evidence="1">
        <text>a 2'-deoxyribonucleoside 5'-diphosphate + ATP = a 2'-deoxyribonucleoside 5'-triphosphate + ADP</text>
        <dbReference type="Rhea" id="RHEA:44640"/>
        <dbReference type="ChEBI" id="CHEBI:30616"/>
        <dbReference type="ChEBI" id="CHEBI:61560"/>
        <dbReference type="ChEBI" id="CHEBI:73316"/>
        <dbReference type="ChEBI" id="CHEBI:456216"/>
        <dbReference type="EC" id="2.7.4.6"/>
    </reaction>
</comment>
<comment type="catalytic activity">
    <reaction evidence="1">
        <text>a ribonucleoside 5'-diphosphate + ATP = a ribonucleoside 5'-triphosphate + ADP</text>
        <dbReference type="Rhea" id="RHEA:18113"/>
        <dbReference type="ChEBI" id="CHEBI:30616"/>
        <dbReference type="ChEBI" id="CHEBI:57930"/>
        <dbReference type="ChEBI" id="CHEBI:61557"/>
        <dbReference type="ChEBI" id="CHEBI:456216"/>
        <dbReference type="EC" id="2.7.4.6"/>
    </reaction>
</comment>
<comment type="cofactor">
    <cofactor evidence="1">
        <name>Mg(2+)</name>
        <dbReference type="ChEBI" id="CHEBI:18420"/>
    </cofactor>
</comment>
<comment type="subunit">
    <text evidence="1">Homotetramer.</text>
</comment>
<comment type="subcellular location">
    <subcellularLocation>
        <location evidence="1">Cytoplasm</location>
    </subcellularLocation>
</comment>
<comment type="similarity">
    <text evidence="1">Belongs to the NDK family.</text>
</comment>
<protein>
    <recommendedName>
        <fullName evidence="1">Nucleoside diphosphate kinase</fullName>
        <shortName evidence="1">NDK</shortName>
        <shortName evidence="1">NDP kinase</shortName>
        <ecNumber evidence="1">2.7.4.6</ecNumber>
    </recommendedName>
    <alternativeName>
        <fullName evidence="1">Nucleoside-2-P kinase</fullName>
    </alternativeName>
</protein>
<name>NDK_PECCP</name>
<keyword id="KW-0067">ATP-binding</keyword>
<keyword id="KW-0963">Cytoplasm</keyword>
<keyword id="KW-0418">Kinase</keyword>
<keyword id="KW-0460">Magnesium</keyword>
<keyword id="KW-0479">Metal-binding</keyword>
<keyword id="KW-0546">Nucleotide metabolism</keyword>
<keyword id="KW-0547">Nucleotide-binding</keyword>
<keyword id="KW-0597">Phosphoprotein</keyword>
<keyword id="KW-0808">Transferase</keyword>
<organism>
    <name type="scientific">Pectobacterium carotovorum subsp. carotovorum (strain PC1)</name>
    <dbReference type="NCBI Taxonomy" id="561230"/>
    <lineage>
        <taxon>Bacteria</taxon>
        <taxon>Pseudomonadati</taxon>
        <taxon>Pseudomonadota</taxon>
        <taxon>Gammaproteobacteria</taxon>
        <taxon>Enterobacterales</taxon>
        <taxon>Pectobacteriaceae</taxon>
        <taxon>Pectobacterium</taxon>
    </lineage>
</organism>
<sequence length="142" mass="15521">MTIERTFSIVKPNAVAKNAIGSIYARFESAGFTLVAAKMLRLSREQAEGFYAEHKGKPFFDGLVEFMMSGPIMVQVLEGENAVQRNRDIMGATNPANALAGTLRADYADSFTANAVHGSDSIESAQREIAYFFSDDEICPRA</sequence>
<proteinExistence type="inferred from homology"/>
<evidence type="ECO:0000255" key="1">
    <source>
        <dbReference type="HAMAP-Rule" id="MF_00451"/>
    </source>
</evidence>
<reference key="1">
    <citation type="submission" date="2009-07" db="EMBL/GenBank/DDBJ databases">
        <title>Complete sequence of Pectobacterium carotovorum subsp. carotovorum PC1.</title>
        <authorList>
            <consortium name="US DOE Joint Genome Institute"/>
            <person name="Lucas S."/>
            <person name="Copeland A."/>
            <person name="Lapidus A."/>
            <person name="Glavina del Rio T."/>
            <person name="Tice H."/>
            <person name="Bruce D."/>
            <person name="Goodwin L."/>
            <person name="Pitluck S."/>
            <person name="Munk A.C."/>
            <person name="Brettin T."/>
            <person name="Detter J.C."/>
            <person name="Han C."/>
            <person name="Tapia R."/>
            <person name="Larimer F."/>
            <person name="Land M."/>
            <person name="Hauser L."/>
            <person name="Kyrpides N."/>
            <person name="Mikhailova N."/>
            <person name="Balakrishnan V."/>
            <person name="Glasner J."/>
            <person name="Perna N.T."/>
        </authorList>
    </citation>
    <scope>NUCLEOTIDE SEQUENCE [LARGE SCALE GENOMIC DNA]</scope>
    <source>
        <strain>PC1</strain>
    </source>
</reference>